<gene>
    <name evidence="1" type="primary">truA</name>
    <name type="ordered locus">SPD_1424</name>
</gene>
<evidence type="ECO:0000255" key="1">
    <source>
        <dbReference type="HAMAP-Rule" id="MF_00171"/>
    </source>
</evidence>
<comment type="function">
    <text evidence="1">Formation of pseudouridine at positions 38, 39 and 40 in the anticodon stem and loop of transfer RNAs.</text>
</comment>
<comment type="catalytic activity">
    <reaction evidence="1">
        <text>uridine(38/39/40) in tRNA = pseudouridine(38/39/40) in tRNA</text>
        <dbReference type="Rhea" id="RHEA:22376"/>
        <dbReference type="Rhea" id="RHEA-COMP:10085"/>
        <dbReference type="Rhea" id="RHEA-COMP:10087"/>
        <dbReference type="ChEBI" id="CHEBI:65314"/>
        <dbReference type="ChEBI" id="CHEBI:65315"/>
        <dbReference type="EC" id="5.4.99.12"/>
    </reaction>
</comment>
<comment type="subunit">
    <text evidence="1">Homodimer.</text>
</comment>
<comment type="similarity">
    <text evidence="1">Belongs to the tRNA pseudouridine synthase TruA family.</text>
</comment>
<organism>
    <name type="scientific">Streptococcus pneumoniae serotype 2 (strain D39 / NCTC 7466)</name>
    <dbReference type="NCBI Taxonomy" id="373153"/>
    <lineage>
        <taxon>Bacteria</taxon>
        <taxon>Bacillati</taxon>
        <taxon>Bacillota</taxon>
        <taxon>Bacilli</taxon>
        <taxon>Lactobacillales</taxon>
        <taxon>Streptococcaceae</taxon>
        <taxon>Streptococcus</taxon>
    </lineage>
</organism>
<name>TRUA_STRP2</name>
<reference key="1">
    <citation type="journal article" date="2007" name="J. Bacteriol.">
        <title>Genome sequence of Avery's virulent serotype 2 strain D39 of Streptococcus pneumoniae and comparison with that of unencapsulated laboratory strain R6.</title>
        <authorList>
            <person name="Lanie J.A."/>
            <person name="Ng W.-L."/>
            <person name="Kazmierczak K.M."/>
            <person name="Andrzejewski T.M."/>
            <person name="Davidsen T.M."/>
            <person name="Wayne K.J."/>
            <person name="Tettelin H."/>
            <person name="Glass J.I."/>
            <person name="Winkler M.E."/>
        </authorList>
    </citation>
    <scope>NUCLEOTIDE SEQUENCE [LARGE SCALE GENOMIC DNA]</scope>
    <source>
        <strain>D39 / NCTC 7466</strain>
    </source>
</reference>
<sequence length="249" mass="28412">MTRYKATISYDGYAFAGFQRQSHARSVQEEIEKTLTRLNKGQTITVHGAGRTDSGVHALGQVIHFDLPYQMDEEKLRFALDTQSPEDIDVISIELVADDFHCRYAKHSKTYEFIVDRGRPKNPMRRHYATHFPYPLDVERMQIAIKKLEGTHDFTGFTASGTSVEDKVRTITEASLIVDETGQFLTFTFSGNGFLYKQIRNMVGTLLKIGNNRMPVEQIDLILEKKDRQLAGPTAAPNGLYLKEIRYEE</sequence>
<keyword id="KW-0413">Isomerase</keyword>
<keyword id="KW-1185">Reference proteome</keyword>
<keyword id="KW-0819">tRNA processing</keyword>
<accession>Q04JF7</accession>
<feature type="chain" id="PRO_1000017191" description="tRNA pseudouridine synthase A">
    <location>
        <begin position="1"/>
        <end position="249"/>
    </location>
</feature>
<feature type="active site" description="Nucleophile" evidence="1">
    <location>
        <position position="53"/>
    </location>
</feature>
<feature type="binding site" evidence="1">
    <location>
        <position position="111"/>
    </location>
    <ligand>
        <name>substrate</name>
    </ligand>
</feature>
<protein>
    <recommendedName>
        <fullName evidence="1">tRNA pseudouridine synthase A</fullName>
        <ecNumber evidence="1">5.4.99.12</ecNumber>
    </recommendedName>
    <alternativeName>
        <fullName evidence="1">tRNA pseudouridine(38-40) synthase</fullName>
    </alternativeName>
    <alternativeName>
        <fullName evidence="1">tRNA pseudouridylate synthase I</fullName>
    </alternativeName>
    <alternativeName>
        <fullName evidence="1">tRNA-uridine isomerase I</fullName>
    </alternativeName>
</protein>
<proteinExistence type="inferred from homology"/>
<dbReference type="EC" id="5.4.99.12" evidence="1"/>
<dbReference type="EMBL" id="CP000410">
    <property type="protein sequence ID" value="ABJ55081.1"/>
    <property type="molecule type" value="Genomic_DNA"/>
</dbReference>
<dbReference type="RefSeq" id="WP_000199207.1">
    <property type="nucleotide sequence ID" value="NZ_JAMLJR010000013.1"/>
</dbReference>
<dbReference type="SMR" id="Q04JF7"/>
<dbReference type="PaxDb" id="373153-SPD_1424"/>
<dbReference type="KEGG" id="spd:SPD_1424"/>
<dbReference type="eggNOG" id="COG0101">
    <property type="taxonomic scope" value="Bacteria"/>
</dbReference>
<dbReference type="HOGENOM" id="CLU_014673_0_1_9"/>
<dbReference type="BioCyc" id="SPNE373153:G1G6V-1534-MONOMER"/>
<dbReference type="Proteomes" id="UP000001452">
    <property type="component" value="Chromosome"/>
</dbReference>
<dbReference type="GO" id="GO:0003723">
    <property type="term" value="F:RNA binding"/>
    <property type="evidence" value="ECO:0007669"/>
    <property type="project" value="InterPro"/>
</dbReference>
<dbReference type="GO" id="GO:0160147">
    <property type="term" value="F:tRNA pseudouridine(38-40) synthase activity"/>
    <property type="evidence" value="ECO:0007669"/>
    <property type="project" value="UniProtKB-EC"/>
</dbReference>
<dbReference type="GO" id="GO:0031119">
    <property type="term" value="P:tRNA pseudouridine synthesis"/>
    <property type="evidence" value="ECO:0007669"/>
    <property type="project" value="UniProtKB-UniRule"/>
</dbReference>
<dbReference type="CDD" id="cd02570">
    <property type="entry name" value="PseudoU_synth_EcTruA"/>
    <property type="match status" value="1"/>
</dbReference>
<dbReference type="FunFam" id="3.30.70.580:FF:000001">
    <property type="entry name" value="tRNA pseudouridine synthase A"/>
    <property type="match status" value="1"/>
</dbReference>
<dbReference type="FunFam" id="3.30.70.660:FF:000009">
    <property type="entry name" value="tRNA pseudouridine synthase A"/>
    <property type="match status" value="1"/>
</dbReference>
<dbReference type="Gene3D" id="3.30.70.660">
    <property type="entry name" value="Pseudouridine synthase I, catalytic domain, C-terminal subdomain"/>
    <property type="match status" value="1"/>
</dbReference>
<dbReference type="Gene3D" id="3.30.70.580">
    <property type="entry name" value="Pseudouridine synthase I, catalytic domain, N-terminal subdomain"/>
    <property type="match status" value="1"/>
</dbReference>
<dbReference type="HAMAP" id="MF_00171">
    <property type="entry name" value="TruA"/>
    <property type="match status" value="1"/>
</dbReference>
<dbReference type="InterPro" id="IPR020103">
    <property type="entry name" value="PsdUridine_synth_cat_dom_sf"/>
</dbReference>
<dbReference type="InterPro" id="IPR001406">
    <property type="entry name" value="PsdUridine_synth_TruA"/>
</dbReference>
<dbReference type="InterPro" id="IPR020097">
    <property type="entry name" value="PsdUridine_synth_TruA_a/b_dom"/>
</dbReference>
<dbReference type="InterPro" id="IPR020095">
    <property type="entry name" value="PsdUridine_synth_TruA_C"/>
</dbReference>
<dbReference type="InterPro" id="IPR020094">
    <property type="entry name" value="TruA/RsuA/RluB/E/F_N"/>
</dbReference>
<dbReference type="NCBIfam" id="TIGR00071">
    <property type="entry name" value="hisT_truA"/>
    <property type="match status" value="1"/>
</dbReference>
<dbReference type="PANTHER" id="PTHR11142">
    <property type="entry name" value="PSEUDOURIDYLATE SYNTHASE"/>
    <property type="match status" value="1"/>
</dbReference>
<dbReference type="PANTHER" id="PTHR11142:SF0">
    <property type="entry name" value="TRNA PSEUDOURIDINE SYNTHASE-LIKE 1"/>
    <property type="match status" value="1"/>
</dbReference>
<dbReference type="Pfam" id="PF01416">
    <property type="entry name" value="PseudoU_synth_1"/>
    <property type="match status" value="2"/>
</dbReference>
<dbReference type="PIRSF" id="PIRSF001430">
    <property type="entry name" value="tRNA_psdUrid_synth"/>
    <property type="match status" value="1"/>
</dbReference>
<dbReference type="SUPFAM" id="SSF55120">
    <property type="entry name" value="Pseudouridine synthase"/>
    <property type="match status" value="1"/>
</dbReference>